<proteinExistence type="inferred from homology"/>
<feature type="chain" id="PRO_0000311539" description="Putative iron-sulfur cluster insertion protein ErpA">
    <location>
        <begin position="1"/>
        <end position="124"/>
    </location>
</feature>
<feature type="binding site" evidence="1">
    <location>
        <position position="52"/>
    </location>
    <ligand>
        <name>iron-sulfur cluster</name>
        <dbReference type="ChEBI" id="CHEBI:30408"/>
    </ligand>
</feature>
<feature type="binding site" evidence="1">
    <location>
        <position position="116"/>
    </location>
    <ligand>
        <name>iron-sulfur cluster</name>
        <dbReference type="ChEBI" id="CHEBI:30408"/>
    </ligand>
</feature>
<feature type="binding site" evidence="1">
    <location>
        <position position="118"/>
    </location>
    <ligand>
        <name>iron-sulfur cluster</name>
        <dbReference type="ChEBI" id="CHEBI:30408"/>
    </ligand>
</feature>
<accession>Q8Y242</accession>
<organism>
    <name type="scientific">Ralstonia nicotianae (strain ATCC BAA-1114 / GMI1000)</name>
    <name type="common">Ralstonia solanacearum</name>
    <dbReference type="NCBI Taxonomy" id="267608"/>
    <lineage>
        <taxon>Bacteria</taxon>
        <taxon>Pseudomonadati</taxon>
        <taxon>Pseudomonadota</taxon>
        <taxon>Betaproteobacteria</taxon>
        <taxon>Burkholderiales</taxon>
        <taxon>Burkholderiaceae</taxon>
        <taxon>Ralstonia</taxon>
        <taxon>Ralstonia solanacearum species complex</taxon>
    </lineage>
</organism>
<evidence type="ECO:0000255" key="1">
    <source>
        <dbReference type="HAMAP-Rule" id="MF_01380"/>
    </source>
</evidence>
<gene>
    <name evidence="1" type="primary">erpA</name>
    <name type="ordered locus">RSc0494</name>
</gene>
<dbReference type="EMBL" id="AL646052">
    <property type="protein sequence ID" value="CAD14022.1"/>
    <property type="molecule type" value="Genomic_DNA"/>
</dbReference>
<dbReference type="RefSeq" id="WP_003265486.1">
    <property type="nucleotide sequence ID" value="NC_003295.1"/>
</dbReference>
<dbReference type="SMR" id="Q8Y242"/>
<dbReference type="STRING" id="267608.RSc0494"/>
<dbReference type="EnsemblBacteria" id="CAD14022">
    <property type="protein sequence ID" value="CAD14022"/>
    <property type="gene ID" value="RSc0494"/>
</dbReference>
<dbReference type="GeneID" id="97322255"/>
<dbReference type="KEGG" id="rso:RSc0494"/>
<dbReference type="eggNOG" id="COG0316">
    <property type="taxonomic scope" value="Bacteria"/>
</dbReference>
<dbReference type="HOGENOM" id="CLU_069054_5_3_4"/>
<dbReference type="Proteomes" id="UP000001436">
    <property type="component" value="Chromosome"/>
</dbReference>
<dbReference type="GO" id="GO:0051537">
    <property type="term" value="F:2 iron, 2 sulfur cluster binding"/>
    <property type="evidence" value="ECO:0007669"/>
    <property type="project" value="TreeGrafter"/>
</dbReference>
<dbReference type="GO" id="GO:0051539">
    <property type="term" value="F:4 iron, 4 sulfur cluster binding"/>
    <property type="evidence" value="ECO:0007669"/>
    <property type="project" value="TreeGrafter"/>
</dbReference>
<dbReference type="GO" id="GO:0005506">
    <property type="term" value="F:iron ion binding"/>
    <property type="evidence" value="ECO:0007669"/>
    <property type="project" value="UniProtKB-UniRule"/>
</dbReference>
<dbReference type="GO" id="GO:0016226">
    <property type="term" value="P:iron-sulfur cluster assembly"/>
    <property type="evidence" value="ECO:0007669"/>
    <property type="project" value="UniProtKB-UniRule"/>
</dbReference>
<dbReference type="FunFam" id="2.60.300.12:FF:000002">
    <property type="entry name" value="Iron-sulfur cluster insertion protein ErpA"/>
    <property type="match status" value="1"/>
</dbReference>
<dbReference type="Gene3D" id="2.60.300.12">
    <property type="entry name" value="HesB-like domain"/>
    <property type="match status" value="1"/>
</dbReference>
<dbReference type="HAMAP" id="MF_01380">
    <property type="entry name" value="Fe_S_insert_ErpA"/>
    <property type="match status" value="1"/>
</dbReference>
<dbReference type="InterPro" id="IPR000361">
    <property type="entry name" value="FeS_biogenesis"/>
</dbReference>
<dbReference type="InterPro" id="IPR016092">
    <property type="entry name" value="FeS_cluster_insertion"/>
</dbReference>
<dbReference type="InterPro" id="IPR017870">
    <property type="entry name" value="FeS_cluster_insertion_CS"/>
</dbReference>
<dbReference type="InterPro" id="IPR023063">
    <property type="entry name" value="FeS_cluster_insertion_RrpA"/>
</dbReference>
<dbReference type="InterPro" id="IPR035903">
    <property type="entry name" value="HesB-like_dom_sf"/>
</dbReference>
<dbReference type="NCBIfam" id="TIGR00049">
    <property type="entry name" value="iron-sulfur cluster assembly accessory protein"/>
    <property type="match status" value="1"/>
</dbReference>
<dbReference type="NCBIfam" id="NF010147">
    <property type="entry name" value="PRK13623.1"/>
    <property type="match status" value="1"/>
</dbReference>
<dbReference type="PANTHER" id="PTHR43011">
    <property type="entry name" value="IRON-SULFUR CLUSTER ASSEMBLY 2 HOMOLOG, MITOCHONDRIAL"/>
    <property type="match status" value="1"/>
</dbReference>
<dbReference type="PANTHER" id="PTHR43011:SF1">
    <property type="entry name" value="IRON-SULFUR CLUSTER ASSEMBLY 2 HOMOLOG, MITOCHONDRIAL"/>
    <property type="match status" value="1"/>
</dbReference>
<dbReference type="Pfam" id="PF01521">
    <property type="entry name" value="Fe-S_biosyn"/>
    <property type="match status" value="1"/>
</dbReference>
<dbReference type="SUPFAM" id="SSF89360">
    <property type="entry name" value="HesB-like domain"/>
    <property type="match status" value="1"/>
</dbReference>
<dbReference type="PROSITE" id="PS01152">
    <property type="entry name" value="HESB"/>
    <property type="match status" value="1"/>
</dbReference>
<keyword id="KW-0408">Iron</keyword>
<keyword id="KW-0411">Iron-sulfur</keyword>
<keyword id="KW-0479">Metal-binding</keyword>
<keyword id="KW-1185">Reference proteome</keyword>
<reference key="1">
    <citation type="journal article" date="2002" name="Nature">
        <title>Genome sequence of the plant pathogen Ralstonia solanacearum.</title>
        <authorList>
            <person name="Salanoubat M."/>
            <person name="Genin S."/>
            <person name="Artiguenave F."/>
            <person name="Gouzy J."/>
            <person name="Mangenot S."/>
            <person name="Arlat M."/>
            <person name="Billault A."/>
            <person name="Brottier P."/>
            <person name="Camus J.-C."/>
            <person name="Cattolico L."/>
            <person name="Chandler M."/>
            <person name="Choisne N."/>
            <person name="Claudel-Renard C."/>
            <person name="Cunnac S."/>
            <person name="Demange N."/>
            <person name="Gaspin C."/>
            <person name="Lavie M."/>
            <person name="Moisan A."/>
            <person name="Robert C."/>
            <person name="Saurin W."/>
            <person name="Schiex T."/>
            <person name="Siguier P."/>
            <person name="Thebault P."/>
            <person name="Whalen M."/>
            <person name="Wincker P."/>
            <person name="Levy M."/>
            <person name="Weissenbach J."/>
            <person name="Boucher C.A."/>
        </authorList>
    </citation>
    <scope>NUCLEOTIDE SEQUENCE [LARGE SCALE GENOMIC DNA]</scope>
    <source>
        <strain>ATCC BAA-1114 / GMI1000</strain>
    </source>
</reference>
<protein>
    <recommendedName>
        <fullName evidence="1">Putative iron-sulfur cluster insertion protein ErpA</fullName>
    </recommendedName>
</protein>
<sequence>MNAVAQAATPDVNEVPAPLVFTDSAADKVKQLIEEEGNPELKLRVFVQGGGCSGFQYGFTFDEDTNEDDTTMTKNGVTLLIDSMSYQYLVGAEIDYKEDINGAQFVIKNPNASTTCGCGSSFSV</sequence>
<comment type="function">
    <text evidence="1">Required for insertion of 4Fe-4S clusters.</text>
</comment>
<comment type="cofactor">
    <cofactor evidence="1">
        <name>iron-sulfur cluster</name>
        <dbReference type="ChEBI" id="CHEBI:30408"/>
    </cofactor>
    <text evidence="1">Binds 1 iron-sulfur cluster per subunit.</text>
</comment>
<comment type="subunit">
    <text evidence="1">Homodimer.</text>
</comment>
<comment type="similarity">
    <text evidence="1">Belongs to the HesB/IscA family.</text>
</comment>
<name>ERPA_RALN1</name>